<accession>Q5SY85</accession>
<dbReference type="EMBL" id="AL591543">
    <property type="status" value="NOT_ANNOTATED_CDS"/>
    <property type="molecule type" value="Genomic_DNA"/>
</dbReference>
<dbReference type="BioMuta" id="HGNC:27239"/>
<dbReference type="AGR" id="HGNC:27239"/>
<dbReference type="GeneCards" id="FAM201A"/>
<dbReference type="HGNC" id="HGNC:27239">
    <property type="gene designation" value="FAM201A"/>
</dbReference>
<dbReference type="neXtProt" id="NX_Q5SY85"/>
<dbReference type="InParanoid" id="Q5SY85"/>
<dbReference type="PAN-GO" id="Q5SY85">
    <property type="GO annotations" value="0 GO annotations based on evolutionary models"/>
</dbReference>
<dbReference type="PhylomeDB" id="Q5SY85"/>
<dbReference type="Pharos" id="Q5SY85">
    <property type="development level" value="Tdark"/>
</dbReference>
<dbReference type="PRO" id="PR:Q5SY85"/>
<dbReference type="Proteomes" id="UP000005640">
    <property type="component" value="Unplaced"/>
</dbReference>
<dbReference type="RNAct" id="Q5SY85">
    <property type="molecule type" value="protein"/>
</dbReference>
<proteinExistence type="predicted"/>
<protein>
    <recommendedName>
        <fullName>Protein FAM201A</fullName>
    </recommendedName>
</protein>
<keyword id="KW-1185">Reference proteome</keyword>
<name>F201A_HUMAN</name>
<sequence length="155" mass="16478">MGLRAGSRCRADHLAQPQPQGHLAPVLRCGECWRARGLPGGCCLHTEGGCSLGAQAGWRTAGWEARGRRDLGLETTSAHSRSLLHLSSWRRPDVGEAAGAELLQRAPLQQPDPAQAAVEGGLLARLPRPQDQGCGQHRPHSPRLVDIALPGGGWT</sequence>
<gene>
    <name type="primary">FAM201A</name>
    <name type="synonym">C9orf122</name>
</gene>
<feature type="chain" id="PRO_0000238470" description="Protein FAM201A">
    <location>
        <begin position="1"/>
        <end position="155"/>
    </location>
</feature>
<feature type="region of interest" description="Disordered" evidence="1">
    <location>
        <begin position="130"/>
        <end position="155"/>
    </location>
</feature>
<organism>
    <name type="scientific">Homo sapiens</name>
    <name type="common">Human</name>
    <dbReference type="NCBI Taxonomy" id="9606"/>
    <lineage>
        <taxon>Eukaryota</taxon>
        <taxon>Metazoa</taxon>
        <taxon>Chordata</taxon>
        <taxon>Craniata</taxon>
        <taxon>Vertebrata</taxon>
        <taxon>Euteleostomi</taxon>
        <taxon>Mammalia</taxon>
        <taxon>Eutheria</taxon>
        <taxon>Euarchontoglires</taxon>
        <taxon>Primates</taxon>
        <taxon>Haplorrhini</taxon>
        <taxon>Catarrhini</taxon>
        <taxon>Hominidae</taxon>
        <taxon>Homo</taxon>
    </lineage>
</organism>
<evidence type="ECO:0000256" key="1">
    <source>
        <dbReference type="SAM" id="MobiDB-lite"/>
    </source>
</evidence>
<reference key="1">
    <citation type="journal article" date="2004" name="Nature">
        <title>DNA sequence and analysis of human chromosome 9.</title>
        <authorList>
            <person name="Humphray S.J."/>
            <person name="Oliver K."/>
            <person name="Hunt A.R."/>
            <person name="Plumb R.W."/>
            <person name="Loveland J.E."/>
            <person name="Howe K.L."/>
            <person name="Andrews T.D."/>
            <person name="Searle S."/>
            <person name="Hunt S.E."/>
            <person name="Scott C.E."/>
            <person name="Jones M.C."/>
            <person name="Ainscough R."/>
            <person name="Almeida J.P."/>
            <person name="Ambrose K.D."/>
            <person name="Ashwell R.I.S."/>
            <person name="Babbage A.K."/>
            <person name="Babbage S."/>
            <person name="Bagguley C.L."/>
            <person name="Bailey J."/>
            <person name="Banerjee R."/>
            <person name="Barker D.J."/>
            <person name="Barlow K.F."/>
            <person name="Bates K."/>
            <person name="Beasley H."/>
            <person name="Beasley O."/>
            <person name="Bird C.P."/>
            <person name="Bray-Allen S."/>
            <person name="Brown A.J."/>
            <person name="Brown J.Y."/>
            <person name="Burford D."/>
            <person name="Burrill W."/>
            <person name="Burton J."/>
            <person name="Carder C."/>
            <person name="Carter N.P."/>
            <person name="Chapman J.C."/>
            <person name="Chen Y."/>
            <person name="Clarke G."/>
            <person name="Clark S.Y."/>
            <person name="Clee C.M."/>
            <person name="Clegg S."/>
            <person name="Collier R.E."/>
            <person name="Corby N."/>
            <person name="Crosier M."/>
            <person name="Cummings A.T."/>
            <person name="Davies J."/>
            <person name="Dhami P."/>
            <person name="Dunn M."/>
            <person name="Dutta I."/>
            <person name="Dyer L.W."/>
            <person name="Earthrowl M.E."/>
            <person name="Faulkner L."/>
            <person name="Fleming C.J."/>
            <person name="Frankish A."/>
            <person name="Frankland J.A."/>
            <person name="French L."/>
            <person name="Fricker D.G."/>
            <person name="Garner P."/>
            <person name="Garnett J."/>
            <person name="Ghori J."/>
            <person name="Gilbert J.G.R."/>
            <person name="Glison C."/>
            <person name="Grafham D.V."/>
            <person name="Gribble S."/>
            <person name="Griffiths C."/>
            <person name="Griffiths-Jones S."/>
            <person name="Grocock R."/>
            <person name="Guy J."/>
            <person name="Hall R.E."/>
            <person name="Hammond S."/>
            <person name="Harley J.L."/>
            <person name="Harrison E.S.I."/>
            <person name="Hart E.A."/>
            <person name="Heath P.D."/>
            <person name="Henderson C.D."/>
            <person name="Hopkins B.L."/>
            <person name="Howard P.J."/>
            <person name="Howden P.J."/>
            <person name="Huckle E."/>
            <person name="Johnson C."/>
            <person name="Johnson D."/>
            <person name="Joy A.A."/>
            <person name="Kay M."/>
            <person name="Keenan S."/>
            <person name="Kershaw J.K."/>
            <person name="Kimberley A.M."/>
            <person name="King A."/>
            <person name="Knights A."/>
            <person name="Laird G.K."/>
            <person name="Langford C."/>
            <person name="Lawlor S."/>
            <person name="Leongamornlert D.A."/>
            <person name="Leversha M."/>
            <person name="Lloyd C."/>
            <person name="Lloyd D.M."/>
            <person name="Lovell J."/>
            <person name="Martin S."/>
            <person name="Mashreghi-Mohammadi M."/>
            <person name="Matthews L."/>
            <person name="McLaren S."/>
            <person name="McLay K.E."/>
            <person name="McMurray A."/>
            <person name="Milne S."/>
            <person name="Nickerson T."/>
            <person name="Nisbett J."/>
            <person name="Nordsiek G."/>
            <person name="Pearce A.V."/>
            <person name="Peck A.I."/>
            <person name="Porter K.M."/>
            <person name="Pandian R."/>
            <person name="Pelan S."/>
            <person name="Phillimore B."/>
            <person name="Povey S."/>
            <person name="Ramsey Y."/>
            <person name="Rand V."/>
            <person name="Scharfe M."/>
            <person name="Sehra H.K."/>
            <person name="Shownkeen R."/>
            <person name="Sims S.K."/>
            <person name="Skuce C.D."/>
            <person name="Smith M."/>
            <person name="Steward C.A."/>
            <person name="Swarbreck D."/>
            <person name="Sycamore N."/>
            <person name="Tester J."/>
            <person name="Thorpe A."/>
            <person name="Tracey A."/>
            <person name="Tromans A."/>
            <person name="Thomas D.W."/>
            <person name="Wall M."/>
            <person name="Wallis J.M."/>
            <person name="West A.P."/>
            <person name="Whitehead S.L."/>
            <person name="Willey D.L."/>
            <person name="Williams S.A."/>
            <person name="Wilming L."/>
            <person name="Wray P.W."/>
            <person name="Young L."/>
            <person name="Ashurst J.L."/>
            <person name="Coulson A."/>
            <person name="Blocker H."/>
            <person name="Durbin R.M."/>
            <person name="Sulston J.E."/>
            <person name="Hubbard T."/>
            <person name="Jackson M.J."/>
            <person name="Bentley D.R."/>
            <person name="Beck S."/>
            <person name="Rogers J."/>
            <person name="Dunham I."/>
        </authorList>
    </citation>
    <scope>NUCLEOTIDE SEQUENCE [LARGE SCALE GENOMIC DNA]</scope>
</reference>